<evidence type="ECO:0000255" key="1">
    <source>
        <dbReference type="PROSITE-ProRule" id="PRU00711"/>
    </source>
</evidence>
<evidence type="ECO:0000269" key="2">
    <source>
    </source>
</evidence>
<evidence type="ECO:0000269" key="3">
    <source>
    </source>
</evidence>
<evidence type="ECO:0000269" key="4">
    <source>
    </source>
</evidence>
<evidence type="ECO:0000269" key="5">
    <source>
    </source>
</evidence>
<evidence type="ECO:0000303" key="6">
    <source>
    </source>
</evidence>
<evidence type="ECO:0000305" key="7"/>
<evidence type="ECO:0000305" key="8">
    <source>
    </source>
</evidence>
<evidence type="ECO:0000312" key="9">
    <source>
        <dbReference type="EMBL" id="ABK48569.1"/>
    </source>
</evidence>
<evidence type="ECO:0007744" key="10">
    <source>
        <dbReference type="PDB" id="6CZ7"/>
    </source>
</evidence>
<evidence type="ECO:0007744" key="11">
    <source>
        <dbReference type="PDB" id="6CZ8"/>
    </source>
</evidence>
<evidence type="ECO:0007744" key="12">
    <source>
        <dbReference type="PDB" id="6CZ9"/>
    </source>
</evidence>
<evidence type="ECO:0007744" key="13">
    <source>
        <dbReference type="PDB" id="6CZA"/>
    </source>
</evidence>
<evidence type="ECO:0007829" key="14">
    <source>
        <dbReference type="PDB" id="6CZ7"/>
    </source>
</evidence>
<dbReference type="EMBL" id="AY271310">
    <property type="protein sequence ID" value="AAQ01673.1"/>
    <property type="molecule type" value="Genomic_DNA"/>
</dbReference>
<dbReference type="EMBL" id="CP000469">
    <property type="protein sequence ID" value="ABK48569.1"/>
    <property type="molecule type" value="Genomic_DNA"/>
</dbReference>
<dbReference type="RefSeq" id="WP_011717271.1">
    <property type="nucleotide sequence ID" value="NC_008577.1"/>
</dbReference>
<dbReference type="PDB" id="6CZ7">
    <property type="method" value="X-ray"/>
    <property type="resolution" value="1.62 A"/>
    <property type="chains" value="B/D=1-234"/>
</dbReference>
<dbReference type="PDB" id="6CZ8">
    <property type="method" value="X-ray"/>
    <property type="resolution" value="1.78 A"/>
    <property type="chains" value="B/D=1-234"/>
</dbReference>
<dbReference type="PDB" id="6CZ9">
    <property type="method" value="X-ray"/>
    <property type="resolution" value="1.80 A"/>
    <property type="chains" value="B/D=1-234"/>
</dbReference>
<dbReference type="PDB" id="6CZA">
    <property type="method" value="X-ray"/>
    <property type="resolution" value="1.71 A"/>
    <property type="chains" value="B/D=1-234"/>
</dbReference>
<dbReference type="PDBsum" id="6CZ7"/>
<dbReference type="PDBsum" id="6CZ8"/>
<dbReference type="PDBsum" id="6CZ9"/>
<dbReference type="PDBsum" id="6CZA"/>
<dbReference type="SMR" id="Q7WTT9"/>
<dbReference type="STRING" id="94122.Shewana3_2340"/>
<dbReference type="KEGG" id="shn:Shewana3_2340"/>
<dbReference type="eggNOG" id="COG0437">
    <property type="taxonomic scope" value="Bacteria"/>
</dbReference>
<dbReference type="HOGENOM" id="CLU_043374_1_0_6"/>
<dbReference type="OrthoDB" id="9779457at2"/>
<dbReference type="BioCyc" id="MetaCyc:MONOMER-10762"/>
<dbReference type="Proteomes" id="UP000002589">
    <property type="component" value="Chromosome"/>
</dbReference>
<dbReference type="GO" id="GO:0042597">
    <property type="term" value="C:periplasmic space"/>
    <property type="evidence" value="ECO:0007669"/>
    <property type="project" value="UniProtKB-SubCell"/>
</dbReference>
<dbReference type="GO" id="GO:0051539">
    <property type="term" value="F:4 iron, 4 sulfur cluster binding"/>
    <property type="evidence" value="ECO:0007669"/>
    <property type="project" value="UniProtKB-KW"/>
</dbReference>
<dbReference type="GO" id="GO:0046872">
    <property type="term" value="F:metal ion binding"/>
    <property type="evidence" value="ECO:0007669"/>
    <property type="project" value="UniProtKB-KW"/>
</dbReference>
<dbReference type="CDD" id="cd10551">
    <property type="entry name" value="PsrB"/>
    <property type="match status" value="1"/>
</dbReference>
<dbReference type="Gene3D" id="3.30.70.20">
    <property type="match status" value="2"/>
</dbReference>
<dbReference type="InterPro" id="IPR017896">
    <property type="entry name" value="4Fe4S_Fe-S-bd"/>
</dbReference>
<dbReference type="InterPro" id="IPR017900">
    <property type="entry name" value="4Fe4S_Fe_S_CS"/>
</dbReference>
<dbReference type="InterPro" id="IPR053684">
    <property type="entry name" value="ArrB_iron-sulfur_subunit"/>
</dbReference>
<dbReference type="InterPro" id="IPR050954">
    <property type="entry name" value="ET_IronSulfur_Cluster-Binding"/>
</dbReference>
<dbReference type="NCBIfam" id="NF041715">
    <property type="entry name" value="arsenate_red_ArrB"/>
    <property type="match status" value="1"/>
</dbReference>
<dbReference type="PANTHER" id="PTHR43177">
    <property type="entry name" value="PROTEIN NRFC"/>
    <property type="match status" value="1"/>
</dbReference>
<dbReference type="PANTHER" id="PTHR43177:SF3">
    <property type="entry name" value="PROTEIN NRFC HOMOLOG"/>
    <property type="match status" value="1"/>
</dbReference>
<dbReference type="Pfam" id="PF13247">
    <property type="entry name" value="Fer4_11"/>
    <property type="match status" value="2"/>
</dbReference>
<dbReference type="Pfam" id="PF12800">
    <property type="entry name" value="Fer4_4"/>
    <property type="match status" value="1"/>
</dbReference>
<dbReference type="SUPFAM" id="SSF54862">
    <property type="entry name" value="4Fe-4S ferredoxins"/>
    <property type="match status" value="1"/>
</dbReference>
<dbReference type="PROSITE" id="PS00198">
    <property type="entry name" value="4FE4S_FER_1"/>
    <property type="match status" value="1"/>
</dbReference>
<dbReference type="PROSITE" id="PS51379">
    <property type="entry name" value="4FE4S_FER_2"/>
    <property type="match status" value="3"/>
</dbReference>
<gene>
    <name evidence="6" type="primary">arrB</name>
    <name evidence="9" type="ordered locus">Shewana3_2340</name>
</gene>
<organism>
    <name type="scientific">Shewanella sp. (strain ANA-3)</name>
    <dbReference type="NCBI Taxonomy" id="94122"/>
    <lineage>
        <taxon>Bacteria</taxon>
        <taxon>Pseudomonadati</taxon>
        <taxon>Pseudomonadota</taxon>
        <taxon>Gammaproteobacteria</taxon>
        <taxon>Alteromonadales</taxon>
        <taxon>Shewanellaceae</taxon>
        <taxon>Shewanella</taxon>
    </lineage>
</organism>
<keyword id="KW-0002">3D-structure</keyword>
<keyword id="KW-0004">4Fe-4S</keyword>
<keyword id="KW-0249">Electron transport</keyword>
<keyword id="KW-0408">Iron</keyword>
<keyword id="KW-0411">Iron-sulfur</keyword>
<keyword id="KW-0479">Metal-binding</keyword>
<keyword id="KW-0574">Periplasm</keyword>
<keyword id="KW-0677">Repeat</keyword>
<keyword id="KW-0813">Transport</keyword>
<accession>Q7WTT9</accession>
<protein>
    <recommendedName>
        <fullName evidence="7">Arsenate respiratory reductase iron-sulfur subunit ArrB</fullName>
    </recommendedName>
    <alternativeName>
        <fullName evidence="7">Arsenate respiratory reductase small subunit</fullName>
        <shortName evidence="7">ARR small subunit</shortName>
    </alternativeName>
</protein>
<proteinExistence type="evidence at protein level"/>
<comment type="function">
    <text evidence="2 4 5">Component of the arsenate respiratory reductase (Arr) complex, which catalyzes the reduction of arsenate (As(V)) to arsenite (As(III)) (PubMed:12939408, PubMed:17951391, PubMed:30104376). ArrB is probably the electron transfer subunit (PubMed:30104376). The periplasmic localization of this complex may allow the cell to couple arsenate reduction to energy production before arsenate can be transported to the cell cytoplasm and enter the ars detoxification pathway, an energy-requiring process (PubMed:17951391).</text>
</comment>
<comment type="cofactor">
    <cofactor evidence="5 8">
        <name>[4Fe-4S] cluster</name>
        <dbReference type="ChEBI" id="CHEBI:49883"/>
    </cofactor>
    <text evidence="5">Binds 4 [4Fe-4S] cluster.</text>
</comment>
<comment type="activity regulation">
    <text evidence="5">Phosphate is a competitive inhibitor.</text>
</comment>
<comment type="biophysicochemical properties">
    <kinetics>
        <Vmax evidence="4">11111.0 umol/min/mg enzyme</Vmax>
        <text evidence="5">kcat is 9810 sec(-1).</text>
    </kinetics>
    <phDependence>
        <text evidence="5">Optimum pH is 7.5.</text>
    </phDependence>
</comment>
<comment type="subunit">
    <text evidence="4 5">Heterodimer composed of one large subunit (ArrA) and one small subunit (ArrB).</text>
</comment>
<comment type="subcellular location">
    <subcellularLocation>
        <location evidence="4">Periplasm</location>
    </subcellularLocation>
</comment>
<comment type="induction">
    <text evidence="3">The arrA-arrB operon is induced under anaerobic conditions in the presence of nanomolar concentrations of arsenite or low micromolar concentrations of arsenate (PubMed:16237022). Expression is repressed under aerobic conditions and in the presence of nitrate (PubMed:16237022). The peak of expression occurs during the exponential phase of growth (PubMed:16237022).</text>
</comment>
<comment type="disruption phenotype">
    <text evidence="2">Deletion mutants are incapable of growing on arsenate, but are still able to grow on a wide variety of other electron acceptors as efficiently as the wild-type.</text>
</comment>
<sequence length="234" mass="25733">MRLGMVIDLQKCVGCGGCSLACKTENNTNDGIHWSHHIATTEGTFPDVKYTYIPTLCNHCDDAPCVKVCPTGAMHKDKRGLTLQNNDECIGCKKCMNACPYGVISFNAATPHRRWQDDSEVVANGTVSPLMLLKRTGATATPNENPERGDTYPMIRPKRTTEKCTFCDHRLDKGLNPACVDACPSEARVIGDLDDPQSKVSQLIKLHKPMQLKPEAGTGPRVFYIRSFGVKTAY</sequence>
<feature type="chain" id="PRO_0000456241" description="Arsenate respiratory reductase iron-sulfur subunit ArrB">
    <location>
        <begin position="1"/>
        <end position="234"/>
    </location>
</feature>
<feature type="domain" description="4Fe-4S ferredoxin-type 1" evidence="1">
    <location>
        <begin position="3"/>
        <end position="32"/>
    </location>
</feature>
<feature type="domain" description="4Fe-4S ferredoxin-type 2" evidence="1">
    <location>
        <begin position="48"/>
        <end position="79"/>
    </location>
</feature>
<feature type="domain" description="4Fe-4S ferredoxin-type 3" evidence="1">
    <location>
        <begin position="80"/>
        <end position="109"/>
    </location>
</feature>
<feature type="binding site" evidence="5 10 11 12 13">
    <location>
        <position position="12"/>
    </location>
    <ligand>
        <name>[4Fe-4S] cluster</name>
        <dbReference type="ChEBI" id="CHEBI:49883"/>
        <label>1</label>
    </ligand>
</feature>
<feature type="binding site" evidence="5 10 11 12 13">
    <location>
        <position position="15"/>
    </location>
    <ligand>
        <name>[4Fe-4S] cluster</name>
        <dbReference type="ChEBI" id="CHEBI:49883"/>
        <label>1</label>
    </ligand>
</feature>
<feature type="binding site" evidence="5 10 11 12 13">
    <location>
        <position position="18"/>
    </location>
    <ligand>
        <name>[4Fe-4S] cluster</name>
        <dbReference type="ChEBI" id="CHEBI:49883"/>
        <label>1</label>
    </ligand>
</feature>
<feature type="binding site" evidence="5 10 11 12 13">
    <location>
        <position position="22"/>
    </location>
    <ligand>
        <name>[4Fe-4S] cluster</name>
        <dbReference type="ChEBI" id="CHEBI:49883"/>
        <label>2</label>
    </ligand>
</feature>
<feature type="binding site" evidence="5 10 11 12 13">
    <location>
        <position position="57"/>
    </location>
    <ligand>
        <name>[4Fe-4S] cluster</name>
        <dbReference type="ChEBI" id="CHEBI:49883"/>
        <label>3</label>
    </ligand>
</feature>
<feature type="binding site" evidence="5 10 11 12 13">
    <location>
        <position position="60"/>
    </location>
    <ligand>
        <name>[4Fe-4S] cluster</name>
        <dbReference type="ChEBI" id="CHEBI:49883"/>
        <label>3</label>
    </ligand>
</feature>
<feature type="binding site" evidence="5 10 11 12 13">
    <location>
        <position position="65"/>
    </location>
    <ligand>
        <name>[4Fe-4S] cluster</name>
        <dbReference type="ChEBI" id="CHEBI:49883"/>
        <label>3</label>
    </ligand>
</feature>
<feature type="binding site" evidence="5 10 11 12 13">
    <location>
        <position position="69"/>
    </location>
    <ligand>
        <name>[4Fe-4S] cluster</name>
        <dbReference type="ChEBI" id="CHEBI:49883"/>
        <label>4</label>
    </ligand>
</feature>
<feature type="binding site" evidence="5 10 11 12 13">
    <location>
        <position position="89"/>
    </location>
    <ligand>
        <name>[4Fe-4S] cluster</name>
        <dbReference type="ChEBI" id="CHEBI:49883"/>
        <label>4</label>
    </ligand>
</feature>
<feature type="binding site" evidence="5 10 11 12 13">
    <location>
        <position position="92"/>
    </location>
    <ligand>
        <name>[4Fe-4S] cluster</name>
        <dbReference type="ChEBI" id="CHEBI:49883"/>
        <label>4</label>
    </ligand>
</feature>
<feature type="binding site" evidence="5 10 11 12 13">
    <location>
        <position position="95"/>
    </location>
    <ligand>
        <name>[4Fe-4S] cluster</name>
        <dbReference type="ChEBI" id="CHEBI:49883"/>
        <label>4</label>
    </ligand>
</feature>
<feature type="binding site" evidence="5 10 11 12 13">
    <location>
        <position position="99"/>
    </location>
    <ligand>
        <name>[4Fe-4S] cluster</name>
        <dbReference type="ChEBI" id="CHEBI:49883"/>
        <label>3</label>
    </ligand>
</feature>
<feature type="binding site" evidence="5 10 11 12 13">
    <location>
        <position position="164"/>
    </location>
    <ligand>
        <name>[4Fe-4S] cluster</name>
        <dbReference type="ChEBI" id="CHEBI:49883"/>
        <label>2</label>
    </ligand>
</feature>
<feature type="binding site" evidence="5 10 11 12 13">
    <location>
        <position position="167"/>
    </location>
    <ligand>
        <name>[4Fe-4S] cluster</name>
        <dbReference type="ChEBI" id="CHEBI:49883"/>
        <label>2</label>
    </ligand>
</feature>
<feature type="binding site" evidence="5 10 11 12 13">
    <location>
        <position position="179"/>
    </location>
    <ligand>
        <name>[4Fe-4S] cluster</name>
        <dbReference type="ChEBI" id="CHEBI:49883"/>
        <label>2</label>
    </ligand>
</feature>
<feature type="binding site" evidence="5 10 11 12 13">
    <location>
        <position position="183"/>
    </location>
    <ligand>
        <name>[4Fe-4S] cluster</name>
        <dbReference type="ChEBI" id="CHEBI:49883"/>
        <label>1</label>
    </ligand>
</feature>
<feature type="strand" evidence="14">
    <location>
        <begin position="3"/>
        <end position="8"/>
    </location>
</feature>
<feature type="turn" evidence="14">
    <location>
        <begin position="9"/>
        <end position="11"/>
    </location>
</feature>
<feature type="helix" evidence="14">
    <location>
        <begin position="17"/>
        <end position="26"/>
    </location>
</feature>
<feature type="strand" evidence="14">
    <location>
        <begin position="34"/>
        <end position="44"/>
    </location>
</feature>
<feature type="strand" evidence="14">
    <location>
        <begin position="49"/>
        <end position="55"/>
    </location>
</feature>
<feature type="helix" evidence="14">
    <location>
        <begin position="64"/>
        <end position="68"/>
    </location>
</feature>
<feature type="strand" evidence="14">
    <location>
        <begin position="70"/>
        <end position="72"/>
    </location>
</feature>
<feature type="strand" evidence="14">
    <location>
        <begin position="74"/>
        <end position="76"/>
    </location>
</feature>
<feature type="strand" evidence="14">
    <location>
        <begin position="82"/>
        <end position="84"/>
    </location>
</feature>
<feature type="helix" evidence="14">
    <location>
        <begin position="86"/>
        <end position="88"/>
    </location>
</feature>
<feature type="helix" evidence="14">
    <location>
        <begin position="94"/>
        <end position="98"/>
    </location>
</feature>
<feature type="helix" evidence="14">
    <location>
        <begin position="113"/>
        <end position="116"/>
    </location>
</feature>
<feature type="turn" evidence="14">
    <location>
        <begin position="123"/>
        <end position="125"/>
    </location>
</feature>
<feature type="helix" evidence="14">
    <location>
        <begin position="129"/>
        <end position="136"/>
    </location>
</feature>
<feature type="helix" evidence="14">
    <location>
        <begin position="146"/>
        <end position="150"/>
    </location>
</feature>
<feature type="helix" evidence="14">
    <location>
        <begin position="168"/>
        <end position="171"/>
    </location>
</feature>
<feature type="turn" evidence="14">
    <location>
        <begin position="172"/>
        <end position="174"/>
    </location>
</feature>
<feature type="helix" evidence="14">
    <location>
        <begin position="178"/>
        <end position="182"/>
    </location>
</feature>
<feature type="strand" evidence="14">
    <location>
        <begin position="188"/>
        <end position="192"/>
    </location>
</feature>
<feature type="helix" evidence="14">
    <location>
        <begin position="199"/>
        <end position="206"/>
    </location>
</feature>
<feature type="helix" evidence="14">
    <location>
        <begin position="214"/>
        <end position="216"/>
    </location>
</feature>
<feature type="strand" evidence="14">
    <location>
        <begin position="222"/>
        <end position="226"/>
    </location>
</feature>
<name>ARRB_SHESA</name>
<reference key="1">
    <citation type="journal article" date="2003" name="Proc. Natl. Acad. Sci. U.S.A.">
        <title>Genetic identification of a respiratory arsenate reductase.</title>
        <authorList>
            <person name="Saltikov C.W."/>
            <person name="Newman D.K."/>
        </authorList>
    </citation>
    <scope>NUCLEOTIDE SEQUENCE [GENOMIC DNA]</scope>
    <scope>FUNCTION</scope>
    <scope>DISRUPTION PHENOTYPE</scope>
    <source>
        <strain>ANA-3</strain>
    </source>
</reference>
<reference key="2">
    <citation type="submission" date="2006-09" db="EMBL/GenBank/DDBJ databases">
        <title>Complete sequence of chromosome 1 of Shewanella sp. ANA-3.</title>
        <authorList>
            <person name="Copeland A."/>
            <person name="Lucas S."/>
            <person name="Lapidus A."/>
            <person name="Barry K."/>
            <person name="Detter J.C."/>
            <person name="Glavina del Rio T."/>
            <person name="Hammon N."/>
            <person name="Israni S."/>
            <person name="Dalin E."/>
            <person name="Tice H."/>
            <person name="Pitluck S."/>
            <person name="Chertkov O."/>
            <person name="Brettin T."/>
            <person name="Bruce D."/>
            <person name="Han C."/>
            <person name="Tapia R."/>
            <person name="Gilna P."/>
            <person name="Schmutz J."/>
            <person name="Larimer F."/>
            <person name="Land M."/>
            <person name="Hauser L."/>
            <person name="Kyrpides N."/>
            <person name="Kim E."/>
            <person name="Newman D."/>
            <person name="Salticov C."/>
            <person name="Konstantinidis K."/>
            <person name="Klappenback J."/>
            <person name="Tiedje J."/>
            <person name="Richardson P."/>
        </authorList>
    </citation>
    <scope>NUCLEOTIDE SEQUENCE [LARGE SCALE GENOMIC DNA]</scope>
    <source>
        <strain>ANA-3</strain>
    </source>
</reference>
<reference key="3">
    <citation type="journal article" date="2005" name="J. Bacteriol.">
        <title>Expression dynamics of arsenic respiration and detoxification in Shewanella sp. strain ANA-3.</title>
        <authorList>
            <person name="Saltikov C.W."/>
            <person name="Wildman R.A. Jr."/>
            <person name="Newman D.K."/>
        </authorList>
    </citation>
    <scope>INDUCTION</scope>
    <source>
        <strain>ANA-3</strain>
    </source>
</reference>
<reference key="4">
    <citation type="journal article" date="2008" name="J. Bacteriol.">
        <title>Characterization of the arsenate respiratory reductase from Shewanella sp. strain ANA-3.</title>
        <authorList>
            <person name="Malasarn D."/>
            <person name="Keeffe J.R."/>
            <person name="Newman D.K."/>
        </authorList>
    </citation>
    <scope>FUNCTION</scope>
    <scope>COFACTOR</scope>
    <scope>BIOPHYSICOCHEMICAL PROPERTIES</scope>
    <scope>SUBUNIT</scope>
    <scope>SUBCELLULAR LOCATION</scope>
    <scope>IDENTIFICATION BY MASS SPECTROMETRY</scope>
    <source>
        <strain>ANA-3</strain>
    </source>
</reference>
<reference evidence="10 11 12 13" key="5">
    <citation type="journal article" date="2018" name="Proc. Natl. Acad. Sci. U.S.A.">
        <title>Structural and mechanistic analysis of the arsenate respiratory reductase provides insight into environmental arsenic transformations.</title>
        <authorList>
            <person name="Glasser N.R."/>
            <person name="Oyala P.H."/>
            <person name="Osborne T.H."/>
            <person name="Santini J.M."/>
            <person name="Newman D.K."/>
        </authorList>
    </citation>
    <scope>X-RAY CRYSTALLOGRAPHY (1.62 ANGSTROMS) IN COMPLEXES WITH ARRA; IRON-SULFUR (4FE-4S); MOLYBDENUM ION; MOLYBDOPTERIN; ARSENITE AND ARSENATE</scope>
    <scope>FUNCTION</scope>
    <scope>COFACTOR</scope>
    <scope>ACTIVITY REGULATION</scope>
    <scope>BIOPHYSICOCHEMICAL PROPERTIES</scope>
    <scope>SUBUNIT</scope>
</reference>